<reference key="1">
    <citation type="journal article" date="2005" name="Nucleic Acids Res.">
        <title>Genome dynamics and diversity of Shigella species, the etiologic agents of bacillary dysentery.</title>
        <authorList>
            <person name="Yang F."/>
            <person name="Yang J."/>
            <person name="Zhang X."/>
            <person name="Chen L."/>
            <person name="Jiang Y."/>
            <person name="Yan Y."/>
            <person name="Tang X."/>
            <person name="Wang J."/>
            <person name="Xiong Z."/>
            <person name="Dong J."/>
            <person name="Xue Y."/>
            <person name="Zhu Y."/>
            <person name="Xu X."/>
            <person name="Sun L."/>
            <person name="Chen S."/>
            <person name="Nie H."/>
            <person name="Peng J."/>
            <person name="Xu J."/>
            <person name="Wang Y."/>
            <person name="Yuan Z."/>
            <person name="Wen Y."/>
            <person name="Yao Z."/>
            <person name="Shen Y."/>
            <person name="Qiang B."/>
            <person name="Hou Y."/>
            <person name="Yu J."/>
            <person name="Jin Q."/>
        </authorList>
    </citation>
    <scope>NUCLEOTIDE SEQUENCE [LARGE SCALE GENOMIC DNA]</scope>
    <source>
        <strain>Sb227</strain>
    </source>
</reference>
<feature type="chain" id="PRO_0000305597" description="Anaerobic nitric oxide reductase flavorubredoxin">
    <location>
        <begin position="1"/>
        <end position="479"/>
    </location>
</feature>
<feature type="domain" description="Flavodoxin-like" evidence="1">
    <location>
        <begin position="254"/>
        <end position="393"/>
    </location>
</feature>
<feature type="domain" description="Rubredoxin-like" evidence="1">
    <location>
        <begin position="423"/>
        <end position="474"/>
    </location>
</feature>
<feature type="region of interest" description="Zinc metallo-hydrolase">
    <location>
        <begin position="30"/>
        <end position="210"/>
    </location>
</feature>
<feature type="binding site" evidence="1">
    <location>
        <position position="79"/>
    </location>
    <ligand>
        <name>Fe cation</name>
        <dbReference type="ChEBI" id="CHEBI:24875"/>
        <label>1</label>
    </ligand>
</feature>
<feature type="binding site" evidence="1">
    <location>
        <position position="81"/>
    </location>
    <ligand>
        <name>Fe cation</name>
        <dbReference type="ChEBI" id="CHEBI:24875"/>
        <label>1</label>
    </ligand>
</feature>
<feature type="binding site" evidence="1">
    <location>
        <position position="83"/>
    </location>
    <ligand>
        <name>Fe cation</name>
        <dbReference type="ChEBI" id="CHEBI:24875"/>
        <label>2</label>
    </ligand>
</feature>
<feature type="binding site" evidence="1">
    <location>
        <position position="147"/>
    </location>
    <ligand>
        <name>Fe cation</name>
        <dbReference type="ChEBI" id="CHEBI:24875"/>
        <label>1</label>
    </ligand>
</feature>
<feature type="binding site" evidence="1">
    <location>
        <position position="166"/>
    </location>
    <ligand>
        <name>Fe cation</name>
        <dbReference type="ChEBI" id="CHEBI:24875"/>
        <label>1</label>
    </ligand>
</feature>
<feature type="binding site" evidence="1">
    <location>
        <position position="166"/>
    </location>
    <ligand>
        <name>Fe cation</name>
        <dbReference type="ChEBI" id="CHEBI:24875"/>
        <label>2</label>
    </ligand>
</feature>
<feature type="binding site" evidence="1">
    <location>
        <position position="227"/>
    </location>
    <ligand>
        <name>Fe cation</name>
        <dbReference type="ChEBI" id="CHEBI:24875"/>
        <label>2</label>
    </ligand>
</feature>
<feature type="binding site" evidence="1">
    <location>
        <begin position="260"/>
        <end position="264"/>
    </location>
    <ligand>
        <name>FMN</name>
        <dbReference type="ChEBI" id="CHEBI:58210"/>
    </ligand>
</feature>
<feature type="binding site" evidence="1">
    <location>
        <begin position="342"/>
        <end position="369"/>
    </location>
    <ligand>
        <name>FMN</name>
        <dbReference type="ChEBI" id="CHEBI:58210"/>
    </ligand>
</feature>
<feature type="binding site" evidence="1">
    <location>
        <position position="428"/>
    </location>
    <ligand>
        <name>Fe cation</name>
        <dbReference type="ChEBI" id="CHEBI:24875"/>
        <label>3</label>
    </ligand>
</feature>
<feature type="binding site" evidence="1">
    <location>
        <position position="431"/>
    </location>
    <ligand>
        <name>Fe cation</name>
        <dbReference type="ChEBI" id="CHEBI:24875"/>
        <label>3</label>
    </ligand>
</feature>
<feature type="binding site" evidence="1">
    <location>
        <position position="461"/>
    </location>
    <ligand>
        <name>Fe cation</name>
        <dbReference type="ChEBI" id="CHEBI:24875"/>
        <label>3</label>
    </ligand>
</feature>
<feature type="binding site" evidence="1">
    <location>
        <position position="464"/>
    </location>
    <ligand>
        <name>Fe cation</name>
        <dbReference type="ChEBI" id="CHEBI:24875"/>
        <label>3</label>
    </ligand>
</feature>
<organism>
    <name type="scientific">Shigella boydii serotype 4 (strain Sb227)</name>
    <dbReference type="NCBI Taxonomy" id="300268"/>
    <lineage>
        <taxon>Bacteria</taxon>
        <taxon>Pseudomonadati</taxon>
        <taxon>Pseudomonadota</taxon>
        <taxon>Gammaproteobacteria</taxon>
        <taxon>Enterobacterales</taxon>
        <taxon>Enterobacteriaceae</taxon>
        <taxon>Shigella</taxon>
    </lineage>
</organism>
<gene>
    <name evidence="1" type="primary">norV</name>
    <name evidence="1" type="synonym">flrD</name>
    <name type="ordered locus">SBO_2808</name>
</gene>
<evidence type="ECO:0000255" key="1">
    <source>
        <dbReference type="HAMAP-Rule" id="MF_01312"/>
    </source>
</evidence>
<sequence length="479" mass="54262">MSIVVKNNIHWVGQRDWEVRDFHGTEYKTLRGSSYNSYLIREEKNVLIDTVDHKFSREFVQNLRNEIDLADIDYIVINHAEEDHAGALTELMAQIPDTPIYCTANAIDSINGHHHHPEWNFNVVKTGDTLDIGNGKQLIFVETPMLHWPDSMMTYLTGDAVLFSNDAFGQHYCDEHLFNDEVDQTELFEQCQRYYANILTPFSRLVTPKITEILGFNLPVDMIATSHGVVWRDNPTQIVELYLKWAADYQEDRITIFYDTMSNNTRMMADAIAQGIAETDPRVAVKIFNVARSDKNEILTNVFRSKGVLVGTSTMNNVMMPKIAGLVEEMTGLRFRNKRASAFGSHGWSGGAVDRLSTRLQDAGFEMSLSLKAKWRPDQDALELCREHGREIARQWALAPLPQSTVNKVVKEETSATTTADLGPRMQCSVCQWIYDPAKGEPMQDVAPGTPWSEVPDNFLCPECSLGKDVFEELASEAK</sequence>
<comment type="function">
    <text evidence="1">Anaerobic nitric oxide reductase; uses NADH to detoxify nitric oxide (NO), protecting several 4Fe-4S NO-sensitive enzymes. Has at least 2 reductase partners, only one of which (NorW, flavorubredoxin reductase) has been identified. NO probably binds to the di-iron center; electrons enter from the NorW at rubredoxin and are transferred sequentially to the FMN center and the di-iron center. Also able to function as an aerobic oxygen reductase.</text>
</comment>
<comment type="cofactor">
    <cofactor evidence="1">
        <name>Fe cation</name>
        <dbReference type="ChEBI" id="CHEBI:24875"/>
    </cofactor>
    <text evidence="1">Binds 3 Fe cations per monomer.</text>
</comment>
<comment type="cofactor">
    <cofactor evidence="1">
        <name>FMN</name>
        <dbReference type="ChEBI" id="CHEBI:58210"/>
    </cofactor>
    <text evidence="1">Binds 1 FMN per monomer.</text>
</comment>
<comment type="pathway">
    <text evidence="1">Nitrogen metabolism; nitric oxide reduction.</text>
</comment>
<comment type="subunit">
    <text evidence="1">Homotetramer.</text>
</comment>
<comment type="subcellular location">
    <subcellularLocation>
        <location evidence="1">Cytoplasm</location>
    </subcellularLocation>
</comment>
<comment type="similarity">
    <text evidence="1">In the N-terminal section; belongs to the zinc metallo-hydrolase group 3 family.</text>
</comment>
<proteinExistence type="inferred from homology"/>
<name>NORV_SHIBS</name>
<dbReference type="EMBL" id="CP000036">
    <property type="protein sequence ID" value="ABB67334.1"/>
    <property type="molecule type" value="Genomic_DNA"/>
</dbReference>
<dbReference type="RefSeq" id="WP_000029610.1">
    <property type="nucleotide sequence ID" value="NC_007613.1"/>
</dbReference>
<dbReference type="SMR" id="Q31X74"/>
<dbReference type="KEGG" id="sbo:SBO_2808"/>
<dbReference type="HOGENOM" id="CLU_017490_0_1_6"/>
<dbReference type="UniPathway" id="UPA00638"/>
<dbReference type="Proteomes" id="UP000007067">
    <property type="component" value="Chromosome"/>
</dbReference>
<dbReference type="GO" id="GO:0005737">
    <property type="term" value="C:cytoplasm"/>
    <property type="evidence" value="ECO:0007669"/>
    <property type="project" value="UniProtKB-SubCell"/>
</dbReference>
<dbReference type="GO" id="GO:0009055">
    <property type="term" value="F:electron transfer activity"/>
    <property type="evidence" value="ECO:0007669"/>
    <property type="project" value="UniProtKB-UniRule"/>
</dbReference>
<dbReference type="GO" id="GO:0010181">
    <property type="term" value="F:FMN binding"/>
    <property type="evidence" value="ECO:0007669"/>
    <property type="project" value="InterPro"/>
</dbReference>
<dbReference type="GO" id="GO:0005506">
    <property type="term" value="F:iron ion binding"/>
    <property type="evidence" value="ECO:0007669"/>
    <property type="project" value="InterPro"/>
</dbReference>
<dbReference type="GO" id="GO:0016966">
    <property type="term" value="F:nitric oxide reductase activity"/>
    <property type="evidence" value="ECO:0007669"/>
    <property type="project" value="InterPro"/>
</dbReference>
<dbReference type="CDD" id="cd07709">
    <property type="entry name" value="flavodiiron_proteins_MBL-fold"/>
    <property type="match status" value="1"/>
</dbReference>
<dbReference type="CDD" id="cd00730">
    <property type="entry name" value="rubredoxin"/>
    <property type="match status" value="1"/>
</dbReference>
<dbReference type="FunFam" id="2.20.28.10:FF:000010">
    <property type="entry name" value="Anaerobic nitric oxide reductase flavorubredoxin"/>
    <property type="match status" value="1"/>
</dbReference>
<dbReference type="FunFam" id="3.40.50.360:FF:000012">
    <property type="entry name" value="Anaerobic nitric oxide reductase flavorubredoxin"/>
    <property type="match status" value="1"/>
</dbReference>
<dbReference type="FunFam" id="3.60.15.10:FF:000009">
    <property type="entry name" value="Anaerobic nitric oxide reductase flavorubredoxin"/>
    <property type="match status" value="1"/>
</dbReference>
<dbReference type="Gene3D" id="2.20.28.10">
    <property type="match status" value="1"/>
</dbReference>
<dbReference type="Gene3D" id="3.40.50.360">
    <property type="match status" value="1"/>
</dbReference>
<dbReference type="Gene3D" id="3.60.15.10">
    <property type="entry name" value="Ribonuclease Z/Hydroxyacylglutathione hydrolase-like"/>
    <property type="match status" value="1"/>
</dbReference>
<dbReference type="HAMAP" id="MF_01312">
    <property type="entry name" value="NorV"/>
    <property type="match status" value="1"/>
</dbReference>
<dbReference type="InterPro" id="IPR023957">
    <property type="entry name" value="Anaer_NO_rdtase_flvorubredoxin"/>
</dbReference>
<dbReference type="InterPro" id="IPR008254">
    <property type="entry name" value="Flavodoxin/NO_synth"/>
</dbReference>
<dbReference type="InterPro" id="IPR029039">
    <property type="entry name" value="Flavoprotein-like_sf"/>
</dbReference>
<dbReference type="InterPro" id="IPR001279">
    <property type="entry name" value="Metallo-B-lactamas"/>
</dbReference>
<dbReference type="InterPro" id="IPR045761">
    <property type="entry name" value="ODP_dom"/>
</dbReference>
<dbReference type="InterPro" id="IPR036866">
    <property type="entry name" value="RibonucZ/Hydroxyglut_hydro"/>
</dbReference>
<dbReference type="InterPro" id="IPR024934">
    <property type="entry name" value="Rubredoxin-like_dom"/>
</dbReference>
<dbReference type="InterPro" id="IPR016440">
    <property type="entry name" value="Rubredoxin-O_OxRdtase"/>
</dbReference>
<dbReference type="InterPro" id="IPR024935">
    <property type="entry name" value="Rubredoxin_dom"/>
</dbReference>
<dbReference type="NCBIfam" id="NF003954">
    <property type="entry name" value="PRK05452.1"/>
    <property type="match status" value="1"/>
</dbReference>
<dbReference type="PANTHER" id="PTHR43717">
    <property type="entry name" value="ANAEROBIC NITRIC OXIDE REDUCTASE FLAVORUBREDOXIN"/>
    <property type="match status" value="1"/>
</dbReference>
<dbReference type="PANTHER" id="PTHR43717:SF1">
    <property type="entry name" value="ANAEROBIC NITRIC OXIDE REDUCTASE FLAVORUBREDOXIN"/>
    <property type="match status" value="1"/>
</dbReference>
<dbReference type="Pfam" id="PF00258">
    <property type="entry name" value="Flavodoxin_1"/>
    <property type="match status" value="1"/>
</dbReference>
<dbReference type="Pfam" id="PF19583">
    <property type="entry name" value="ODP"/>
    <property type="match status" value="1"/>
</dbReference>
<dbReference type="Pfam" id="PF00301">
    <property type="entry name" value="Rubredoxin"/>
    <property type="match status" value="1"/>
</dbReference>
<dbReference type="PIRSF" id="PIRSF005243">
    <property type="entry name" value="ROO"/>
    <property type="match status" value="1"/>
</dbReference>
<dbReference type="PRINTS" id="PR00163">
    <property type="entry name" value="RUBREDOXIN"/>
</dbReference>
<dbReference type="SMART" id="SM00849">
    <property type="entry name" value="Lactamase_B"/>
    <property type="match status" value="1"/>
</dbReference>
<dbReference type="SUPFAM" id="SSF52218">
    <property type="entry name" value="Flavoproteins"/>
    <property type="match status" value="1"/>
</dbReference>
<dbReference type="SUPFAM" id="SSF56281">
    <property type="entry name" value="Metallo-hydrolase/oxidoreductase"/>
    <property type="match status" value="1"/>
</dbReference>
<dbReference type="SUPFAM" id="SSF57802">
    <property type="entry name" value="Rubredoxin-like"/>
    <property type="match status" value="1"/>
</dbReference>
<dbReference type="PROSITE" id="PS50902">
    <property type="entry name" value="FLAVODOXIN_LIKE"/>
    <property type="match status" value="1"/>
</dbReference>
<dbReference type="PROSITE" id="PS50903">
    <property type="entry name" value="RUBREDOXIN_LIKE"/>
    <property type="match status" value="1"/>
</dbReference>
<keyword id="KW-0963">Cytoplasm</keyword>
<keyword id="KW-0249">Electron transport</keyword>
<keyword id="KW-0285">Flavoprotein</keyword>
<keyword id="KW-0288">FMN</keyword>
<keyword id="KW-0408">Iron</keyword>
<keyword id="KW-0479">Metal-binding</keyword>
<keyword id="KW-0560">Oxidoreductase</keyword>
<keyword id="KW-0813">Transport</keyword>
<accession>Q31X74</accession>
<protein>
    <recommendedName>
        <fullName evidence="1">Anaerobic nitric oxide reductase flavorubredoxin</fullName>
        <shortName evidence="1">FlRd</shortName>
        <shortName evidence="1">FlavoRb</shortName>
    </recommendedName>
</protein>